<keyword id="KW-0414">Isoprene biosynthesis</keyword>
<keyword id="KW-0548">Nucleotidyltransferase</keyword>
<keyword id="KW-1185">Reference proteome</keyword>
<keyword id="KW-0808">Transferase</keyword>
<evidence type="ECO:0000255" key="1">
    <source>
        <dbReference type="HAMAP-Rule" id="MF_00108"/>
    </source>
</evidence>
<comment type="function">
    <text evidence="1">Catalyzes the formation of 4-diphosphocytidyl-2-C-methyl-D-erythritol from CTP and 2-C-methyl-D-erythritol 4-phosphate (MEP).</text>
</comment>
<comment type="catalytic activity">
    <reaction evidence="1">
        <text>2-C-methyl-D-erythritol 4-phosphate + CTP + H(+) = 4-CDP-2-C-methyl-D-erythritol + diphosphate</text>
        <dbReference type="Rhea" id="RHEA:13429"/>
        <dbReference type="ChEBI" id="CHEBI:15378"/>
        <dbReference type="ChEBI" id="CHEBI:33019"/>
        <dbReference type="ChEBI" id="CHEBI:37563"/>
        <dbReference type="ChEBI" id="CHEBI:57823"/>
        <dbReference type="ChEBI" id="CHEBI:58262"/>
        <dbReference type="EC" id="2.7.7.60"/>
    </reaction>
</comment>
<comment type="pathway">
    <text evidence="1">Isoprenoid biosynthesis; isopentenyl diphosphate biosynthesis via DXP pathway; isopentenyl diphosphate from 1-deoxy-D-xylulose 5-phosphate: step 2/6.</text>
</comment>
<comment type="similarity">
    <text evidence="1">Belongs to the IspD/TarI cytidylyltransferase family. IspD subfamily.</text>
</comment>
<gene>
    <name evidence="1" type="primary">ispD</name>
    <name type="ordered locus">PA3633</name>
</gene>
<proteinExistence type="inferred from homology"/>
<name>ISPD_PSEAE</name>
<sequence length="234" mass="25613">MTTSDLPAFWTVIPAAGVGSRMRADRPKQYLDLAGRTVIERTLDCFLEHPMLRGLVVCLAEDDPYWPGLDCAASRHVQRAAGGAERAGSVLNGLLRLLELGAQADDWVLVHDAARPNLTRGDLDRLLEELAEDPVGGLLAVPARDTLKRSDRDGRVSETIDRSVVWLAYTPQMFRLGALHRALADALVAGVAITDEASAMEWAGYAPKLVEGRADNLKITTPEDLLRLQRSFPH</sequence>
<dbReference type="EC" id="2.7.7.60" evidence="1"/>
<dbReference type="EMBL" id="AE004091">
    <property type="protein sequence ID" value="AAG07021.1"/>
    <property type="molecule type" value="Genomic_DNA"/>
</dbReference>
<dbReference type="PIR" id="F83191">
    <property type="entry name" value="F83191"/>
</dbReference>
<dbReference type="RefSeq" id="WP_003092359.1">
    <property type="nucleotide sequence ID" value="NZ_QZGE01000001.1"/>
</dbReference>
<dbReference type="SMR" id="P57707"/>
<dbReference type="FunCoup" id="P57707">
    <property type="interactions" value="568"/>
</dbReference>
<dbReference type="STRING" id="208964.PA3633"/>
<dbReference type="PaxDb" id="208964-PA3633"/>
<dbReference type="DNASU" id="880461"/>
<dbReference type="KEGG" id="pae:PA3633"/>
<dbReference type="PATRIC" id="fig|208964.12.peg.3802"/>
<dbReference type="PseudoCAP" id="PA3633"/>
<dbReference type="HOGENOM" id="CLU_061281_3_1_6"/>
<dbReference type="InParanoid" id="P57707"/>
<dbReference type="OrthoDB" id="9806837at2"/>
<dbReference type="PhylomeDB" id="P57707"/>
<dbReference type="BioCyc" id="PAER208964:G1FZ6-3703-MONOMER"/>
<dbReference type="UniPathway" id="UPA00056">
    <property type="reaction ID" value="UER00093"/>
</dbReference>
<dbReference type="Proteomes" id="UP000002438">
    <property type="component" value="Chromosome"/>
</dbReference>
<dbReference type="GO" id="GO:0050518">
    <property type="term" value="F:2-C-methyl-D-erythritol 4-phosphate cytidylyltransferase activity"/>
    <property type="evidence" value="ECO:0000318"/>
    <property type="project" value="GO_Central"/>
</dbReference>
<dbReference type="GO" id="GO:0019288">
    <property type="term" value="P:isopentenyl diphosphate biosynthetic process, methylerythritol 4-phosphate pathway"/>
    <property type="evidence" value="ECO:0007669"/>
    <property type="project" value="UniProtKB-UniRule"/>
</dbReference>
<dbReference type="CDD" id="cd02516">
    <property type="entry name" value="CDP-ME_synthetase"/>
    <property type="match status" value="1"/>
</dbReference>
<dbReference type="FunFam" id="3.90.550.10:FF:000003">
    <property type="entry name" value="2-C-methyl-D-erythritol 4-phosphate cytidylyltransferase"/>
    <property type="match status" value="1"/>
</dbReference>
<dbReference type="Gene3D" id="3.90.550.10">
    <property type="entry name" value="Spore Coat Polysaccharide Biosynthesis Protein SpsA, Chain A"/>
    <property type="match status" value="1"/>
</dbReference>
<dbReference type="HAMAP" id="MF_00108">
    <property type="entry name" value="IspD"/>
    <property type="match status" value="1"/>
</dbReference>
<dbReference type="InterPro" id="IPR001228">
    <property type="entry name" value="IspD"/>
</dbReference>
<dbReference type="InterPro" id="IPR034683">
    <property type="entry name" value="IspD/TarI"/>
</dbReference>
<dbReference type="InterPro" id="IPR050088">
    <property type="entry name" value="IspD/TarI_cytidylyltransf_bact"/>
</dbReference>
<dbReference type="InterPro" id="IPR018294">
    <property type="entry name" value="ISPD_synthase_CS"/>
</dbReference>
<dbReference type="InterPro" id="IPR029044">
    <property type="entry name" value="Nucleotide-diphossugar_trans"/>
</dbReference>
<dbReference type="NCBIfam" id="TIGR00453">
    <property type="entry name" value="ispD"/>
    <property type="match status" value="1"/>
</dbReference>
<dbReference type="PANTHER" id="PTHR32125">
    <property type="entry name" value="2-C-METHYL-D-ERYTHRITOL 4-PHOSPHATE CYTIDYLYLTRANSFERASE, CHLOROPLASTIC"/>
    <property type="match status" value="1"/>
</dbReference>
<dbReference type="PANTHER" id="PTHR32125:SF4">
    <property type="entry name" value="2-C-METHYL-D-ERYTHRITOL 4-PHOSPHATE CYTIDYLYLTRANSFERASE, CHLOROPLASTIC"/>
    <property type="match status" value="1"/>
</dbReference>
<dbReference type="Pfam" id="PF01128">
    <property type="entry name" value="IspD"/>
    <property type="match status" value="1"/>
</dbReference>
<dbReference type="SUPFAM" id="SSF53448">
    <property type="entry name" value="Nucleotide-diphospho-sugar transferases"/>
    <property type="match status" value="1"/>
</dbReference>
<dbReference type="PROSITE" id="PS01295">
    <property type="entry name" value="ISPD"/>
    <property type="match status" value="1"/>
</dbReference>
<protein>
    <recommendedName>
        <fullName evidence="1">2-C-methyl-D-erythritol 4-phosphate cytidylyltransferase</fullName>
        <ecNumber evidence="1">2.7.7.60</ecNumber>
    </recommendedName>
    <alternativeName>
        <fullName evidence="1">4-diphosphocytidyl-2C-methyl-D-erythritol synthase</fullName>
    </alternativeName>
    <alternativeName>
        <fullName evidence="1">MEP cytidylyltransferase</fullName>
        <shortName evidence="1">MCT</shortName>
    </alternativeName>
</protein>
<reference key="1">
    <citation type="journal article" date="2000" name="Nature">
        <title>Complete genome sequence of Pseudomonas aeruginosa PAO1, an opportunistic pathogen.</title>
        <authorList>
            <person name="Stover C.K."/>
            <person name="Pham X.-Q.T."/>
            <person name="Erwin A.L."/>
            <person name="Mizoguchi S.D."/>
            <person name="Warrener P."/>
            <person name="Hickey M.J."/>
            <person name="Brinkman F.S.L."/>
            <person name="Hufnagle W.O."/>
            <person name="Kowalik D.J."/>
            <person name="Lagrou M."/>
            <person name="Garber R.L."/>
            <person name="Goltry L."/>
            <person name="Tolentino E."/>
            <person name="Westbrock-Wadman S."/>
            <person name="Yuan Y."/>
            <person name="Brody L.L."/>
            <person name="Coulter S.N."/>
            <person name="Folger K.R."/>
            <person name="Kas A."/>
            <person name="Larbig K."/>
            <person name="Lim R.M."/>
            <person name="Smith K.A."/>
            <person name="Spencer D.H."/>
            <person name="Wong G.K.-S."/>
            <person name="Wu Z."/>
            <person name="Paulsen I.T."/>
            <person name="Reizer J."/>
            <person name="Saier M.H. Jr."/>
            <person name="Hancock R.E.W."/>
            <person name="Lory S."/>
            <person name="Olson M.V."/>
        </authorList>
    </citation>
    <scope>NUCLEOTIDE SEQUENCE [LARGE SCALE GENOMIC DNA]</scope>
    <source>
        <strain>ATCC 15692 / DSM 22644 / CIP 104116 / JCM 14847 / LMG 12228 / 1C / PRS 101 / PAO1</strain>
    </source>
</reference>
<organism>
    <name type="scientific">Pseudomonas aeruginosa (strain ATCC 15692 / DSM 22644 / CIP 104116 / JCM 14847 / LMG 12228 / 1C / PRS 101 / PAO1)</name>
    <dbReference type="NCBI Taxonomy" id="208964"/>
    <lineage>
        <taxon>Bacteria</taxon>
        <taxon>Pseudomonadati</taxon>
        <taxon>Pseudomonadota</taxon>
        <taxon>Gammaproteobacteria</taxon>
        <taxon>Pseudomonadales</taxon>
        <taxon>Pseudomonadaceae</taxon>
        <taxon>Pseudomonas</taxon>
    </lineage>
</organism>
<feature type="chain" id="PRO_0000075604" description="2-C-methyl-D-erythritol 4-phosphate cytidylyltransferase">
    <location>
        <begin position="1"/>
        <end position="234"/>
    </location>
</feature>
<feature type="site" description="Transition state stabilizer" evidence="1">
    <location>
        <position position="21"/>
    </location>
</feature>
<feature type="site" description="Transition state stabilizer" evidence="1">
    <location>
        <position position="28"/>
    </location>
</feature>
<feature type="site" description="Positions MEP for the nucleophilic attack" evidence="1">
    <location>
        <position position="162"/>
    </location>
</feature>
<feature type="site" description="Positions MEP for the nucleophilic attack" evidence="1">
    <location>
        <position position="218"/>
    </location>
</feature>
<accession>P57707</accession>
<accession>Q9HXZ7</accession>